<accession>Q8EHV6</accession>
<keyword id="KW-0997">Cell inner membrane</keyword>
<keyword id="KW-1003">Cell membrane</keyword>
<keyword id="KW-0406">Ion transport</keyword>
<keyword id="KW-0472">Membrane</keyword>
<keyword id="KW-0520">NAD</keyword>
<keyword id="KW-1185">Reference proteome</keyword>
<keyword id="KW-0915">Sodium</keyword>
<keyword id="KW-0739">Sodium transport</keyword>
<keyword id="KW-1278">Translocase</keyword>
<keyword id="KW-0812">Transmembrane</keyword>
<keyword id="KW-1133">Transmembrane helix</keyword>
<keyword id="KW-0813">Transport</keyword>
<keyword id="KW-0830">Ubiquinone</keyword>
<feature type="chain" id="PRO_1000060170" description="Na(+)-translocating NADH-quinone reductase subunit D">
    <location>
        <begin position="1"/>
        <end position="210"/>
    </location>
</feature>
<feature type="transmembrane region" description="Helical" evidence="1">
    <location>
        <begin position="14"/>
        <end position="34"/>
    </location>
</feature>
<feature type="transmembrane region" description="Helical" evidence="1">
    <location>
        <begin position="42"/>
        <end position="62"/>
    </location>
</feature>
<feature type="transmembrane region" description="Helical" evidence="1">
    <location>
        <begin position="72"/>
        <end position="92"/>
    </location>
</feature>
<feature type="transmembrane region" description="Helical" evidence="1">
    <location>
        <begin position="103"/>
        <end position="123"/>
    </location>
</feature>
<feature type="transmembrane region" description="Helical" evidence="1">
    <location>
        <begin position="131"/>
        <end position="151"/>
    </location>
</feature>
<feature type="transmembrane region" description="Helical" evidence="1">
    <location>
        <begin position="178"/>
        <end position="198"/>
    </location>
</feature>
<name>NQRD_SHEON</name>
<evidence type="ECO:0000255" key="1">
    <source>
        <dbReference type="HAMAP-Rule" id="MF_00428"/>
    </source>
</evidence>
<sequence>MSDAKELKQVLTGPIVNNNPIALQVLGVCSALAVTSKLETALVMALALTAVTAFSNLFISMIRNHIPSSVRIIVQMTIIASLVIVVDQLLQAYAYQISKQLSVFVGLIITNCIVMGRAEAYAMKTPPMMSFMDGIGNGLGYGAILLAVGFVRELFGNGSLFGVQILHKISDGGWYQPNGLLLLPPSAFFLIGMLIWIIRTYKPEQVEAKG</sequence>
<protein>
    <recommendedName>
        <fullName evidence="1">Na(+)-translocating NADH-quinone reductase subunit D</fullName>
        <shortName evidence="1">Na(+)-NQR subunit D</shortName>
        <shortName evidence="1">Na(+)-translocating NQR subunit D</shortName>
        <ecNumber evidence="1">7.2.1.1</ecNumber>
    </recommendedName>
    <alternativeName>
        <fullName evidence="1">NQR complex subunit D</fullName>
    </alternativeName>
    <alternativeName>
        <fullName evidence="1">NQR-1 subunit D</fullName>
    </alternativeName>
</protein>
<gene>
    <name evidence="1" type="primary">nqrD</name>
    <name type="ordered locus">SO_1106</name>
</gene>
<dbReference type="EC" id="7.2.1.1" evidence="1"/>
<dbReference type="EMBL" id="AE014299">
    <property type="protein sequence ID" value="AAN54177.1"/>
    <property type="molecule type" value="Genomic_DNA"/>
</dbReference>
<dbReference type="RefSeq" id="NP_716732.1">
    <property type="nucleotide sequence ID" value="NC_004347.2"/>
</dbReference>
<dbReference type="RefSeq" id="WP_011071350.1">
    <property type="nucleotide sequence ID" value="NZ_CP053946.1"/>
</dbReference>
<dbReference type="SMR" id="Q8EHV6"/>
<dbReference type="STRING" id="211586.SO_1106"/>
<dbReference type="PaxDb" id="211586-SO_1106"/>
<dbReference type="KEGG" id="son:SO_1106"/>
<dbReference type="PATRIC" id="fig|211586.12.peg.1060"/>
<dbReference type="eggNOG" id="COG1347">
    <property type="taxonomic scope" value="Bacteria"/>
</dbReference>
<dbReference type="HOGENOM" id="CLU_046659_1_1_6"/>
<dbReference type="OrthoDB" id="9782945at2"/>
<dbReference type="PhylomeDB" id="Q8EHV6"/>
<dbReference type="BioCyc" id="SONE211586:G1GMP-1018-MONOMER"/>
<dbReference type="Proteomes" id="UP000008186">
    <property type="component" value="Chromosome"/>
</dbReference>
<dbReference type="GO" id="GO:0005886">
    <property type="term" value="C:plasma membrane"/>
    <property type="evidence" value="ECO:0000318"/>
    <property type="project" value="GO_Central"/>
</dbReference>
<dbReference type="GO" id="GO:0016655">
    <property type="term" value="F:oxidoreductase activity, acting on NAD(P)H, quinone or similar compound as acceptor"/>
    <property type="evidence" value="ECO:0007669"/>
    <property type="project" value="UniProtKB-UniRule"/>
</dbReference>
<dbReference type="GO" id="GO:0006814">
    <property type="term" value="P:sodium ion transport"/>
    <property type="evidence" value="ECO:0007669"/>
    <property type="project" value="UniProtKB-UniRule"/>
</dbReference>
<dbReference type="HAMAP" id="MF_00428">
    <property type="entry name" value="NqrD"/>
    <property type="match status" value="1"/>
</dbReference>
<dbReference type="InterPro" id="IPR011292">
    <property type="entry name" value="NqrD"/>
</dbReference>
<dbReference type="InterPro" id="IPR003667">
    <property type="entry name" value="NqrDE/RnfAE"/>
</dbReference>
<dbReference type="NCBIfam" id="TIGR01939">
    <property type="entry name" value="nqrD"/>
    <property type="match status" value="1"/>
</dbReference>
<dbReference type="NCBIfam" id="NF006777">
    <property type="entry name" value="PRK09292.1"/>
    <property type="match status" value="1"/>
</dbReference>
<dbReference type="NCBIfam" id="NF009070">
    <property type="entry name" value="PRK12405.1"/>
    <property type="match status" value="1"/>
</dbReference>
<dbReference type="PANTHER" id="PTHR30586">
    <property type="entry name" value="ELECTRON TRANSPORT COMPLEX PROTEIN RNFE"/>
    <property type="match status" value="1"/>
</dbReference>
<dbReference type="PANTHER" id="PTHR30586:SF1">
    <property type="entry name" value="NA(+)-TRANSLOCATING NADH-QUINONE REDUCTASE SUBUNIT D"/>
    <property type="match status" value="1"/>
</dbReference>
<dbReference type="Pfam" id="PF02508">
    <property type="entry name" value="Rnf-Nqr"/>
    <property type="match status" value="1"/>
</dbReference>
<dbReference type="PIRSF" id="PIRSF006102">
    <property type="entry name" value="NQR_DE"/>
    <property type="match status" value="1"/>
</dbReference>
<proteinExistence type="inferred from homology"/>
<reference key="1">
    <citation type="journal article" date="2002" name="Nat. Biotechnol.">
        <title>Genome sequence of the dissimilatory metal ion-reducing bacterium Shewanella oneidensis.</title>
        <authorList>
            <person name="Heidelberg J.F."/>
            <person name="Paulsen I.T."/>
            <person name="Nelson K.E."/>
            <person name="Gaidos E.J."/>
            <person name="Nelson W.C."/>
            <person name="Read T.D."/>
            <person name="Eisen J.A."/>
            <person name="Seshadri R."/>
            <person name="Ward N.L."/>
            <person name="Methe B.A."/>
            <person name="Clayton R.A."/>
            <person name="Meyer T."/>
            <person name="Tsapin A."/>
            <person name="Scott J."/>
            <person name="Beanan M.J."/>
            <person name="Brinkac L.M."/>
            <person name="Daugherty S.C."/>
            <person name="DeBoy R.T."/>
            <person name="Dodson R.J."/>
            <person name="Durkin A.S."/>
            <person name="Haft D.H."/>
            <person name="Kolonay J.F."/>
            <person name="Madupu R."/>
            <person name="Peterson J.D."/>
            <person name="Umayam L.A."/>
            <person name="White O."/>
            <person name="Wolf A.M."/>
            <person name="Vamathevan J.J."/>
            <person name="Weidman J.F."/>
            <person name="Impraim M."/>
            <person name="Lee K."/>
            <person name="Berry K.J."/>
            <person name="Lee C."/>
            <person name="Mueller J."/>
            <person name="Khouri H.M."/>
            <person name="Gill J."/>
            <person name="Utterback T.R."/>
            <person name="McDonald L.A."/>
            <person name="Feldblyum T.V."/>
            <person name="Smith H.O."/>
            <person name="Venter J.C."/>
            <person name="Nealson K.H."/>
            <person name="Fraser C.M."/>
        </authorList>
    </citation>
    <scope>NUCLEOTIDE SEQUENCE [LARGE SCALE GENOMIC DNA]</scope>
    <source>
        <strain>ATCC 700550 / JCM 31522 / CIP 106686 / LMG 19005 / NCIMB 14063 / MR-1</strain>
    </source>
</reference>
<organism>
    <name type="scientific">Shewanella oneidensis (strain ATCC 700550 / JCM 31522 / CIP 106686 / LMG 19005 / NCIMB 14063 / MR-1)</name>
    <dbReference type="NCBI Taxonomy" id="211586"/>
    <lineage>
        <taxon>Bacteria</taxon>
        <taxon>Pseudomonadati</taxon>
        <taxon>Pseudomonadota</taxon>
        <taxon>Gammaproteobacteria</taxon>
        <taxon>Alteromonadales</taxon>
        <taxon>Shewanellaceae</taxon>
        <taxon>Shewanella</taxon>
    </lineage>
</organism>
<comment type="function">
    <text evidence="1">NQR complex catalyzes the reduction of ubiquinone-1 to ubiquinol by two successive reactions, coupled with the transport of Na(+) ions from the cytoplasm to the periplasm. NqrA to NqrE are probably involved in the second step, the conversion of ubisemiquinone to ubiquinol.</text>
</comment>
<comment type="catalytic activity">
    <reaction evidence="1">
        <text>a ubiquinone + n Na(+)(in) + NADH + H(+) = a ubiquinol + n Na(+)(out) + NAD(+)</text>
        <dbReference type="Rhea" id="RHEA:47748"/>
        <dbReference type="Rhea" id="RHEA-COMP:9565"/>
        <dbReference type="Rhea" id="RHEA-COMP:9566"/>
        <dbReference type="ChEBI" id="CHEBI:15378"/>
        <dbReference type="ChEBI" id="CHEBI:16389"/>
        <dbReference type="ChEBI" id="CHEBI:17976"/>
        <dbReference type="ChEBI" id="CHEBI:29101"/>
        <dbReference type="ChEBI" id="CHEBI:57540"/>
        <dbReference type="ChEBI" id="CHEBI:57945"/>
        <dbReference type="EC" id="7.2.1.1"/>
    </reaction>
</comment>
<comment type="subunit">
    <text evidence="1">Composed of six subunits; NqrA, NqrB, NqrC, NqrD, NqrE and NqrF.</text>
</comment>
<comment type="subcellular location">
    <subcellularLocation>
        <location evidence="1">Cell inner membrane</location>
        <topology evidence="1">Multi-pass membrane protein</topology>
    </subcellularLocation>
</comment>
<comment type="similarity">
    <text evidence="1">Belongs to the NqrDE/RnfAE family.</text>
</comment>